<protein>
    <recommendedName>
        <fullName>ATP-dependent molecular chaperone HSP82</fullName>
    </recommendedName>
    <alternativeName>
        <fullName>82 kDa heat shock protein</fullName>
    </alternativeName>
    <alternativeName>
        <fullName>Heat shock protein Hsp90 heat-inducible isoform</fullName>
    </alternativeName>
</protein>
<proteinExistence type="evidence at protein level"/>
<accession>P02829</accession>
<accession>D6W3D1</accession>
<dbReference type="EMBL" id="K01387">
    <property type="protein sequence ID" value="AAA02743.1"/>
    <property type="molecule type" value="Unassigned_RNA"/>
</dbReference>
<dbReference type="EMBL" id="Z67751">
    <property type="protein sequence ID" value="CAA91604.1"/>
    <property type="molecule type" value="Genomic_DNA"/>
</dbReference>
<dbReference type="EMBL" id="Z73596">
    <property type="protein sequence ID" value="CAA97961.1"/>
    <property type="molecule type" value="Genomic_DNA"/>
</dbReference>
<dbReference type="EMBL" id="BK006949">
    <property type="protein sequence ID" value="DAA11197.1"/>
    <property type="molecule type" value="Genomic_DNA"/>
</dbReference>
<dbReference type="PIR" id="A03313">
    <property type="entry name" value="HHBY90"/>
</dbReference>
<dbReference type="RefSeq" id="NP_015084.1">
    <property type="nucleotide sequence ID" value="NM_001184054.1"/>
</dbReference>
<dbReference type="PDB" id="1A4H">
    <property type="method" value="X-ray"/>
    <property type="resolution" value="2.50 A"/>
    <property type="chains" value="A=1-220"/>
</dbReference>
<dbReference type="PDB" id="1AH6">
    <property type="method" value="X-ray"/>
    <property type="resolution" value="1.80 A"/>
    <property type="chains" value="A=1-220"/>
</dbReference>
<dbReference type="PDB" id="1AH8">
    <property type="method" value="X-ray"/>
    <property type="resolution" value="2.10 A"/>
    <property type="chains" value="A/B=1-220"/>
</dbReference>
<dbReference type="PDB" id="1AM1">
    <property type="method" value="X-ray"/>
    <property type="resolution" value="2.00 A"/>
    <property type="chains" value="A=2-214"/>
</dbReference>
<dbReference type="PDB" id="1AMW">
    <property type="method" value="X-ray"/>
    <property type="resolution" value="1.85 A"/>
    <property type="chains" value="A=1-214"/>
</dbReference>
<dbReference type="PDB" id="1BGQ">
    <property type="method" value="X-ray"/>
    <property type="resolution" value="2.50 A"/>
    <property type="chains" value="A=1-214"/>
</dbReference>
<dbReference type="PDB" id="1HK7">
    <property type="method" value="X-ray"/>
    <property type="resolution" value="2.50 A"/>
    <property type="chains" value="A/B=273-560"/>
</dbReference>
<dbReference type="PDB" id="1US7">
    <property type="method" value="X-ray"/>
    <property type="resolution" value="2.30 A"/>
    <property type="chains" value="A=1-214"/>
</dbReference>
<dbReference type="PDB" id="1USU">
    <property type="method" value="X-ray"/>
    <property type="resolution" value="2.15 A"/>
    <property type="chains" value="A=273-530"/>
</dbReference>
<dbReference type="PDB" id="1USV">
    <property type="method" value="X-ray"/>
    <property type="resolution" value="2.70 A"/>
    <property type="chains" value="A/C/E/G=272-530"/>
</dbReference>
<dbReference type="PDB" id="1ZW9">
    <property type="method" value="X-ray"/>
    <property type="resolution" value="1.90 A"/>
    <property type="chains" value="A=1-220"/>
</dbReference>
<dbReference type="PDB" id="1ZWH">
    <property type="method" value="X-ray"/>
    <property type="resolution" value="1.65 A"/>
    <property type="chains" value="A=1-220"/>
</dbReference>
<dbReference type="PDB" id="2AKP">
    <property type="method" value="X-ray"/>
    <property type="resolution" value="1.94 A"/>
    <property type="chains" value="A/B=25-210"/>
</dbReference>
<dbReference type="PDB" id="2BRC">
    <property type="method" value="X-ray"/>
    <property type="resolution" value="1.60 A"/>
    <property type="chains" value="A=1-214"/>
</dbReference>
<dbReference type="PDB" id="2BRE">
    <property type="method" value="X-ray"/>
    <property type="resolution" value="2.00 A"/>
    <property type="chains" value="A/B=1-219"/>
</dbReference>
<dbReference type="PDB" id="2CG9">
    <property type="method" value="X-ray"/>
    <property type="resolution" value="3.10 A"/>
    <property type="chains" value="A/B=1-677"/>
</dbReference>
<dbReference type="PDB" id="2CGE">
    <property type="method" value="X-ray"/>
    <property type="resolution" value="3.00 A"/>
    <property type="chains" value="A/B/D=273-677"/>
</dbReference>
<dbReference type="PDB" id="2CGF">
    <property type="method" value="X-ray"/>
    <property type="resolution" value="2.20 A"/>
    <property type="chains" value="A=1-214"/>
</dbReference>
<dbReference type="PDB" id="2FXS">
    <property type="method" value="X-ray"/>
    <property type="resolution" value="2.00 A"/>
    <property type="chains" value="A=1-220"/>
</dbReference>
<dbReference type="PDB" id="2IWS">
    <property type="method" value="X-ray"/>
    <property type="resolution" value="2.70 A"/>
    <property type="chains" value="A=1-214"/>
</dbReference>
<dbReference type="PDB" id="2IWU">
    <property type="method" value="X-ray"/>
    <property type="resolution" value="2.80 A"/>
    <property type="chains" value="A=1-214"/>
</dbReference>
<dbReference type="PDB" id="2IWX">
    <property type="method" value="X-ray"/>
    <property type="resolution" value="1.50 A"/>
    <property type="chains" value="A=1-214"/>
</dbReference>
<dbReference type="PDB" id="2LSV">
    <property type="method" value="NMR"/>
    <property type="chains" value="B=701-709"/>
</dbReference>
<dbReference type="PDB" id="2VW5">
    <property type="method" value="X-ray"/>
    <property type="resolution" value="1.90 A"/>
    <property type="chains" value="A/B/C/D=1-214"/>
</dbReference>
<dbReference type="PDB" id="2VWC">
    <property type="method" value="X-ray"/>
    <property type="resolution" value="2.40 A"/>
    <property type="chains" value="A=1-219"/>
</dbReference>
<dbReference type="PDB" id="2WEP">
    <property type="method" value="X-ray"/>
    <property type="resolution" value="2.00 A"/>
    <property type="chains" value="A=1-220"/>
</dbReference>
<dbReference type="PDB" id="2WEQ">
    <property type="method" value="X-ray"/>
    <property type="resolution" value="2.20 A"/>
    <property type="chains" value="A=1-220"/>
</dbReference>
<dbReference type="PDB" id="2WER">
    <property type="method" value="X-ray"/>
    <property type="resolution" value="1.60 A"/>
    <property type="chains" value="A/B=1-220"/>
</dbReference>
<dbReference type="PDB" id="2XD6">
    <property type="method" value="X-ray"/>
    <property type="resolution" value="2.20 A"/>
    <property type="chains" value="A=1-214"/>
</dbReference>
<dbReference type="PDB" id="2XX2">
    <property type="method" value="X-ray"/>
    <property type="resolution" value="1.85 A"/>
    <property type="chains" value="A/B/C/D=1-214"/>
</dbReference>
<dbReference type="PDB" id="2XX4">
    <property type="method" value="X-ray"/>
    <property type="resolution" value="2.20 A"/>
    <property type="chains" value="A=1-214"/>
</dbReference>
<dbReference type="PDB" id="2XX5">
    <property type="method" value="X-ray"/>
    <property type="resolution" value="2.00 A"/>
    <property type="chains" value="A=1-214"/>
</dbReference>
<dbReference type="PDB" id="2YGA">
    <property type="method" value="X-ray"/>
    <property type="resolution" value="2.37 A"/>
    <property type="chains" value="A=1-220"/>
</dbReference>
<dbReference type="PDB" id="2YGE">
    <property type="method" value="X-ray"/>
    <property type="resolution" value="1.96 A"/>
    <property type="chains" value="A=1-220"/>
</dbReference>
<dbReference type="PDB" id="2YGF">
    <property type="method" value="X-ray"/>
    <property type="resolution" value="2.00 A"/>
    <property type="chains" value="A=1-220"/>
</dbReference>
<dbReference type="PDB" id="3C0E">
    <property type="method" value="X-ray"/>
    <property type="resolution" value="1.90 A"/>
    <property type="chains" value="A=1-220"/>
</dbReference>
<dbReference type="PDB" id="3C11">
    <property type="method" value="X-ray"/>
    <property type="resolution" value="1.60 A"/>
    <property type="chains" value="A=1-220"/>
</dbReference>
<dbReference type="PDB" id="3FP2">
    <property type="method" value="X-ray"/>
    <property type="resolution" value="1.98 A"/>
    <property type="chains" value="Q=698-709"/>
</dbReference>
<dbReference type="PDB" id="4AS9">
    <property type="method" value="X-ray"/>
    <property type="resolution" value="2.71 A"/>
    <property type="chains" value="A=1-220"/>
</dbReference>
<dbReference type="PDB" id="4ASA">
    <property type="method" value="X-ray"/>
    <property type="resolution" value="2.25 A"/>
    <property type="chains" value="A=1-220"/>
</dbReference>
<dbReference type="PDB" id="4ASB">
    <property type="method" value="X-ray"/>
    <property type="resolution" value="3.08 A"/>
    <property type="chains" value="A=1-220"/>
</dbReference>
<dbReference type="PDB" id="4ASF">
    <property type="method" value="X-ray"/>
    <property type="resolution" value="2.60 A"/>
    <property type="chains" value="A=1-220"/>
</dbReference>
<dbReference type="PDB" id="4ASG">
    <property type="method" value="X-ray"/>
    <property type="resolution" value="2.20 A"/>
    <property type="chains" value="A=1-220"/>
</dbReference>
<dbReference type="PDB" id="4CE1">
    <property type="method" value="X-ray"/>
    <property type="resolution" value="2.01 A"/>
    <property type="chains" value="A=1-214"/>
</dbReference>
<dbReference type="PDB" id="4CE2">
    <property type="method" value="X-ray"/>
    <property type="resolution" value="2.38 A"/>
    <property type="chains" value="A=1-214"/>
</dbReference>
<dbReference type="PDB" id="4CE3">
    <property type="method" value="X-ray"/>
    <property type="resolution" value="2.31 A"/>
    <property type="chains" value="A=1-214"/>
</dbReference>
<dbReference type="PDB" id="5MGX">
    <property type="method" value="X-ray"/>
    <property type="resolution" value="2.18 A"/>
    <property type="chains" value="A/B/C/D=702-709"/>
</dbReference>
<dbReference type="PDB" id="8OXU">
    <property type="method" value="X-ray"/>
    <property type="resolution" value="2.94 A"/>
    <property type="chains" value="A/B/C/D=439-679"/>
</dbReference>
<dbReference type="PDBsum" id="1A4H"/>
<dbReference type="PDBsum" id="1AH6"/>
<dbReference type="PDBsum" id="1AH8"/>
<dbReference type="PDBsum" id="1AM1"/>
<dbReference type="PDBsum" id="1AMW"/>
<dbReference type="PDBsum" id="1BGQ"/>
<dbReference type="PDBsum" id="1HK7"/>
<dbReference type="PDBsum" id="1US7"/>
<dbReference type="PDBsum" id="1USU"/>
<dbReference type="PDBsum" id="1USV"/>
<dbReference type="PDBsum" id="1ZW9"/>
<dbReference type="PDBsum" id="1ZWH"/>
<dbReference type="PDBsum" id="2AKP"/>
<dbReference type="PDBsum" id="2BRC"/>
<dbReference type="PDBsum" id="2BRE"/>
<dbReference type="PDBsum" id="2CG9"/>
<dbReference type="PDBsum" id="2CGE"/>
<dbReference type="PDBsum" id="2CGF"/>
<dbReference type="PDBsum" id="2FXS"/>
<dbReference type="PDBsum" id="2IWS"/>
<dbReference type="PDBsum" id="2IWU"/>
<dbReference type="PDBsum" id="2IWX"/>
<dbReference type="PDBsum" id="2LSV"/>
<dbReference type="PDBsum" id="2VW5"/>
<dbReference type="PDBsum" id="2VWC"/>
<dbReference type="PDBsum" id="2WEP"/>
<dbReference type="PDBsum" id="2WEQ"/>
<dbReference type="PDBsum" id="2WER"/>
<dbReference type="PDBsum" id="2XD6"/>
<dbReference type="PDBsum" id="2XX2"/>
<dbReference type="PDBsum" id="2XX4"/>
<dbReference type="PDBsum" id="2XX5"/>
<dbReference type="PDBsum" id="2YGA"/>
<dbReference type="PDBsum" id="2YGE"/>
<dbReference type="PDBsum" id="2YGF"/>
<dbReference type="PDBsum" id="3C0E"/>
<dbReference type="PDBsum" id="3C11"/>
<dbReference type="PDBsum" id="3FP2"/>
<dbReference type="PDBsum" id="4AS9"/>
<dbReference type="PDBsum" id="4ASA"/>
<dbReference type="PDBsum" id="4ASB"/>
<dbReference type="PDBsum" id="4ASF"/>
<dbReference type="PDBsum" id="4ASG"/>
<dbReference type="PDBsum" id="4CE1"/>
<dbReference type="PDBsum" id="4CE2"/>
<dbReference type="PDBsum" id="4CE3"/>
<dbReference type="PDBsum" id="5MGX"/>
<dbReference type="PDBsum" id="8OXU"/>
<dbReference type="BMRB" id="P02829"/>
<dbReference type="SMR" id="P02829"/>
<dbReference type="BioGRID" id="35923">
    <property type="interactions" value="1884"/>
</dbReference>
<dbReference type="ComplexPortal" id="CPX-1276">
    <property type="entry name" value="HMC complex"/>
</dbReference>
<dbReference type="DIP" id="DIP-2262N"/>
<dbReference type="FunCoup" id="P02829">
    <property type="interactions" value="1767"/>
</dbReference>
<dbReference type="IntAct" id="P02829">
    <property type="interactions" value="390"/>
</dbReference>
<dbReference type="MINT" id="P02829"/>
<dbReference type="STRING" id="4932.YPL240C"/>
<dbReference type="BindingDB" id="P02829"/>
<dbReference type="ChEMBL" id="CHEMBL3536"/>
<dbReference type="DrugCentral" id="P02829"/>
<dbReference type="iPTMnet" id="P02829"/>
<dbReference type="PaxDb" id="4932-YPL240C"/>
<dbReference type="PeptideAtlas" id="P02829"/>
<dbReference type="EnsemblFungi" id="YPL240C_mRNA">
    <property type="protein sequence ID" value="YPL240C"/>
    <property type="gene ID" value="YPL240C"/>
</dbReference>
<dbReference type="GeneID" id="855836"/>
<dbReference type="KEGG" id="sce:YPL240C"/>
<dbReference type="AGR" id="SGD:S000006161"/>
<dbReference type="SGD" id="S000006161">
    <property type="gene designation" value="HSP82"/>
</dbReference>
<dbReference type="VEuPathDB" id="FungiDB:YPL240C"/>
<dbReference type="eggNOG" id="KOG0019">
    <property type="taxonomic scope" value="Eukaryota"/>
</dbReference>
<dbReference type="GeneTree" id="ENSGT01020000230401"/>
<dbReference type="HOGENOM" id="CLU_006684_1_3_1"/>
<dbReference type="InParanoid" id="P02829"/>
<dbReference type="OMA" id="MRRMKEM"/>
<dbReference type="OrthoDB" id="28737at2759"/>
<dbReference type="BioCyc" id="YEAST:G3O-34126-MONOMER"/>
<dbReference type="BRENDA" id="3.6.4.10">
    <property type="organism ID" value="984"/>
</dbReference>
<dbReference type="Reactome" id="R-SCE-1474151">
    <property type="pathway name" value="Tetrahydrobiopterin (BH4) synthesis, recycling, salvage and regulation"/>
</dbReference>
<dbReference type="Reactome" id="R-SCE-203615">
    <property type="pathway name" value="eNOS activation"/>
</dbReference>
<dbReference type="Reactome" id="R-SCE-3371497">
    <property type="pathway name" value="HSP90 chaperone cycle for steroid hormone receptors (SHR) in the presence of ligand"/>
</dbReference>
<dbReference type="Reactome" id="R-SCE-3371511">
    <property type="pathway name" value="HSF1 activation"/>
</dbReference>
<dbReference type="Reactome" id="R-SCE-3371571">
    <property type="pathway name" value="HSF1-dependent transactivation"/>
</dbReference>
<dbReference type="Reactome" id="R-SCE-5218920">
    <property type="pathway name" value="VEGFR2 mediated vascular permeability"/>
</dbReference>
<dbReference type="Reactome" id="R-SCE-6798695">
    <property type="pathway name" value="Neutrophil degranulation"/>
</dbReference>
<dbReference type="Reactome" id="R-SCE-844456">
    <property type="pathway name" value="The NLRP3 inflammasome"/>
</dbReference>
<dbReference type="Reactome" id="R-SCE-9009391">
    <property type="pathway name" value="Extra-nuclear estrogen signaling"/>
</dbReference>
<dbReference type="SABIO-RK" id="P02829"/>
<dbReference type="BioGRID-ORCS" id="855836">
    <property type="hits" value="0 hits in 10 CRISPR screens"/>
</dbReference>
<dbReference type="EvolutionaryTrace" id="P02829"/>
<dbReference type="PHI-base" id="PHI:463"/>
<dbReference type="PRO" id="PR:P02829"/>
<dbReference type="Proteomes" id="UP000002311">
    <property type="component" value="Chromosome XVI"/>
</dbReference>
<dbReference type="RNAct" id="P02829">
    <property type="molecule type" value="protein"/>
</dbReference>
<dbReference type="GO" id="GO:0005737">
    <property type="term" value="C:cytoplasm"/>
    <property type="evidence" value="ECO:0000314"/>
    <property type="project" value="SGD"/>
</dbReference>
<dbReference type="GO" id="GO:0005829">
    <property type="term" value="C:cytosol"/>
    <property type="evidence" value="ECO:0000318"/>
    <property type="project" value="GO_Central"/>
</dbReference>
<dbReference type="GO" id="GO:0005634">
    <property type="term" value="C:nucleus"/>
    <property type="evidence" value="ECO:0000314"/>
    <property type="project" value="SGD"/>
</dbReference>
<dbReference type="GO" id="GO:0048471">
    <property type="term" value="C:perinuclear region of cytoplasm"/>
    <property type="evidence" value="ECO:0000318"/>
    <property type="project" value="GO_Central"/>
</dbReference>
<dbReference type="GO" id="GO:0005886">
    <property type="term" value="C:plasma membrane"/>
    <property type="evidence" value="ECO:0000318"/>
    <property type="project" value="GO_Central"/>
</dbReference>
<dbReference type="GO" id="GO:0032991">
    <property type="term" value="C:protein-containing complex"/>
    <property type="evidence" value="ECO:0000318"/>
    <property type="project" value="GO_Central"/>
</dbReference>
<dbReference type="GO" id="GO:0005524">
    <property type="term" value="F:ATP binding"/>
    <property type="evidence" value="ECO:0000318"/>
    <property type="project" value="GO_Central"/>
</dbReference>
<dbReference type="GO" id="GO:0016887">
    <property type="term" value="F:ATP hydrolysis activity"/>
    <property type="evidence" value="ECO:0000314"/>
    <property type="project" value="SGD"/>
</dbReference>
<dbReference type="GO" id="GO:0140662">
    <property type="term" value="F:ATP-dependent protein folding chaperone"/>
    <property type="evidence" value="ECO:0007669"/>
    <property type="project" value="InterPro"/>
</dbReference>
<dbReference type="GO" id="GO:0042802">
    <property type="term" value="F:identical protein binding"/>
    <property type="evidence" value="ECO:0000353"/>
    <property type="project" value="IntAct"/>
</dbReference>
<dbReference type="GO" id="GO:0051082">
    <property type="term" value="F:unfolded protein binding"/>
    <property type="evidence" value="ECO:0000314"/>
    <property type="project" value="SGD"/>
</dbReference>
<dbReference type="GO" id="GO:0006458">
    <property type="term" value="P:'de novo' protein folding"/>
    <property type="evidence" value="ECO:0000314"/>
    <property type="project" value="SGD"/>
</dbReference>
<dbReference type="GO" id="GO:0000492">
    <property type="term" value="P:box C/D snoRNP assembly"/>
    <property type="evidence" value="ECO:0000315"/>
    <property type="project" value="SGD"/>
</dbReference>
<dbReference type="GO" id="GO:0034605">
    <property type="term" value="P:cellular response to heat"/>
    <property type="evidence" value="ECO:0000318"/>
    <property type="project" value="GO_Central"/>
</dbReference>
<dbReference type="GO" id="GO:0032212">
    <property type="term" value="P:positive regulation of telomere maintenance via telomerase"/>
    <property type="evidence" value="ECO:0000314"/>
    <property type="project" value="SGD"/>
</dbReference>
<dbReference type="GO" id="GO:0043248">
    <property type="term" value="P:proteasome assembly"/>
    <property type="evidence" value="ECO:0000314"/>
    <property type="project" value="SGD"/>
</dbReference>
<dbReference type="GO" id="GO:0006457">
    <property type="term" value="P:protein folding"/>
    <property type="evidence" value="ECO:0000318"/>
    <property type="project" value="GO_Central"/>
</dbReference>
<dbReference type="GO" id="GO:0051604">
    <property type="term" value="P:protein maturation"/>
    <property type="evidence" value="ECO:0000315"/>
    <property type="project" value="SGD"/>
</dbReference>
<dbReference type="GO" id="GO:0042026">
    <property type="term" value="P:protein refolding"/>
    <property type="evidence" value="ECO:0000315"/>
    <property type="project" value="SGD"/>
</dbReference>
<dbReference type="GO" id="GO:0050821">
    <property type="term" value="P:protein stabilization"/>
    <property type="evidence" value="ECO:0000318"/>
    <property type="project" value="GO_Central"/>
</dbReference>
<dbReference type="GO" id="GO:0006626">
    <property type="term" value="P:protein targeting to mitochondrion"/>
    <property type="evidence" value="ECO:0000353"/>
    <property type="project" value="SGD"/>
</dbReference>
<dbReference type="GO" id="GO:0032204">
    <property type="term" value="P:regulation of telomere maintenance"/>
    <property type="evidence" value="ECO:0000315"/>
    <property type="project" value="CACAO"/>
</dbReference>
<dbReference type="GO" id="GO:0006970">
    <property type="term" value="P:response to osmotic stress"/>
    <property type="evidence" value="ECO:0000315"/>
    <property type="project" value="SGD"/>
</dbReference>
<dbReference type="GO" id="GO:0070482">
    <property type="term" value="P:response to oxygen levels"/>
    <property type="evidence" value="ECO:0000303"/>
    <property type="project" value="ComplexPortal"/>
</dbReference>
<dbReference type="CDD" id="cd16927">
    <property type="entry name" value="HATPase_Hsp90-like"/>
    <property type="match status" value="1"/>
</dbReference>
<dbReference type="FunFam" id="1.20.120.790:FF:000001">
    <property type="entry name" value="Heat shock protein 90 alpha"/>
    <property type="match status" value="1"/>
</dbReference>
<dbReference type="FunFam" id="3.30.230.80:FF:000001">
    <property type="entry name" value="Heat shock protein 90 alpha"/>
    <property type="match status" value="1"/>
</dbReference>
<dbReference type="FunFam" id="3.40.50.11260:FF:000001">
    <property type="entry name" value="Heat shock protein 90 alpha"/>
    <property type="match status" value="1"/>
</dbReference>
<dbReference type="FunFam" id="3.30.565.10:FF:000001">
    <property type="entry name" value="Heat shock protein HSP 90-alpha"/>
    <property type="match status" value="1"/>
</dbReference>
<dbReference type="Gene3D" id="3.30.230.80">
    <property type="match status" value="1"/>
</dbReference>
<dbReference type="Gene3D" id="3.40.50.11260">
    <property type="match status" value="1"/>
</dbReference>
<dbReference type="Gene3D" id="1.20.120.790">
    <property type="entry name" value="Heat shock protein 90, C-terminal domain"/>
    <property type="match status" value="1"/>
</dbReference>
<dbReference type="Gene3D" id="3.30.565.10">
    <property type="entry name" value="Histidine kinase-like ATPase, C-terminal domain"/>
    <property type="match status" value="1"/>
</dbReference>
<dbReference type="HAMAP" id="MF_00505">
    <property type="entry name" value="HSP90"/>
    <property type="match status" value="1"/>
</dbReference>
<dbReference type="InterPro" id="IPR036890">
    <property type="entry name" value="HATPase_C_sf"/>
</dbReference>
<dbReference type="InterPro" id="IPR019805">
    <property type="entry name" value="Heat_shock_protein_90_CS"/>
</dbReference>
<dbReference type="InterPro" id="IPR037196">
    <property type="entry name" value="HSP90_C"/>
</dbReference>
<dbReference type="InterPro" id="IPR001404">
    <property type="entry name" value="Hsp90_fam"/>
</dbReference>
<dbReference type="InterPro" id="IPR020575">
    <property type="entry name" value="Hsp90_N"/>
</dbReference>
<dbReference type="InterPro" id="IPR020568">
    <property type="entry name" value="Ribosomal_Su5_D2-typ_SF"/>
</dbReference>
<dbReference type="NCBIfam" id="NF003555">
    <property type="entry name" value="PRK05218.1"/>
    <property type="match status" value="1"/>
</dbReference>
<dbReference type="PANTHER" id="PTHR11528">
    <property type="entry name" value="HEAT SHOCK PROTEIN 90 FAMILY MEMBER"/>
    <property type="match status" value="1"/>
</dbReference>
<dbReference type="Pfam" id="PF13589">
    <property type="entry name" value="HATPase_c_3"/>
    <property type="match status" value="1"/>
</dbReference>
<dbReference type="Pfam" id="PF00183">
    <property type="entry name" value="HSP90"/>
    <property type="match status" value="1"/>
</dbReference>
<dbReference type="PIRSF" id="PIRSF002583">
    <property type="entry name" value="Hsp90"/>
    <property type="match status" value="1"/>
</dbReference>
<dbReference type="PRINTS" id="PR00775">
    <property type="entry name" value="HEATSHOCK90"/>
</dbReference>
<dbReference type="SMART" id="SM00387">
    <property type="entry name" value="HATPase_c"/>
    <property type="match status" value="1"/>
</dbReference>
<dbReference type="SUPFAM" id="SSF55874">
    <property type="entry name" value="ATPase domain of HSP90 chaperone/DNA topoisomerase II/histidine kinase"/>
    <property type="match status" value="1"/>
</dbReference>
<dbReference type="SUPFAM" id="SSF110942">
    <property type="entry name" value="HSP90 C-terminal domain"/>
    <property type="match status" value="1"/>
</dbReference>
<dbReference type="SUPFAM" id="SSF54211">
    <property type="entry name" value="Ribosomal protein S5 domain 2-like"/>
    <property type="match status" value="1"/>
</dbReference>
<dbReference type="PROSITE" id="PS00298">
    <property type="entry name" value="HSP90"/>
    <property type="match status" value="1"/>
</dbReference>
<organism>
    <name type="scientific">Saccharomyces cerevisiae (strain ATCC 204508 / S288c)</name>
    <name type="common">Baker's yeast</name>
    <dbReference type="NCBI Taxonomy" id="559292"/>
    <lineage>
        <taxon>Eukaryota</taxon>
        <taxon>Fungi</taxon>
        <taxon>Dikarya</taxon>
        <taxon>Ascomycota</taxon>
        <taxon>Saccharomycotina</taxon>
        <taxon>Saccharomycetes</taxon>
        <taxon>Saccharomycetales</taxon>
        <taxon>Saccharomycetaceae</taxon>
        <taxon>Saccharomyces</taxon>
    </lineage>
</organism>
<comment type="function">
    <text evidence="15">Molecular chaperone that promotes the maturation, structural maintenance and proper regulation of specific target proteins involved in cell cycle control and signal transduction. Undergoes a functional cycle that is linked to its ATPase activity. The nucleotide-free form of the dimer is found in an open conformation in which the N-termini are not dimerized and the complex is ready for client protein binding. Binding of ATP induces large conformational changes, resulting in the formation of a ring-like closed structure in which the N-terminal domains associate intramolecularly with the middle domain and also dimerize with each other, stimulating their intrinsic ATPase activity and acting as a clamp on the substrate. Finally, ATP hydrolysis results in the release of the substrate. This cycle probably induces conformational changes in the client proteins, thereby causing their activation. Interacts dynamically with various co-chaperones that modulate its substrate recognition, ATPase cycle and chaperone function. Required for growth at high temperatures.</text>
</comment>
<comment type="activity regulation">
    <text>Inhibited by geldanamycin, macbecin I and radicicol, which bind to the ATP-binding pocket. Co-chaperones CDC37, SBA1 and STI1 reduce ATPase activity. Co-chaperones AHA1 and HCH1 increase ATPase activity.</text>
</comment>
<comment type="subunit">
    <text evidence="3 4 5 8 12 13 14 15 17 18 22 24 25 27 28 29 30 31">Homodimer. Interacts with the co-chaperones AHA1, CDC37, CNS1, CPR6, CPR7, HCH1, SBA1, SSE1 and STI1. CNS1, CPR6, CPR7 and STI1. Interacts directly with the substrates GCN2, HAP1 and STE11.</text>
</comment>
<comment type="interaction">
    <interactant intactId="EBI-8659">
        <id>P02829</id>
    </interactant>
    <interactant intactId="EBI-2169">
        <id>P60010</id>
        <label>ACT1</label>
    </interactant>
    <organismsDiffer>false</organismsDiffer>
    <experiments>2</experiments>
</comment>
<comment type="interaction">
    <interactant intactId="EBI-8659">
        <id>P02829</id>
    </interactant>
    <interactant intactId="EBI-14257">
        <id>P27616</id>
        <label>ADE1</label>
    </interactant>
    <organismsDiffer>false</organismsDiffer>
    <experiments>2</experiments>
</comment>
<comment type="interaction">
    <interactant intactId="EBI-8659">
        <id>P02829</id>
    </interactant>
    <interactant intactId="EBI-37072">
        <id>Q12449</id>
        <label>AHA1</label>
    </interactant>
    <organismsDiffer>false</organismsDiffer>
    <experiments>14</experiments>
</comment>
<comment type="interaction">
    <interactant intactId="EBI-8659">
        <id>P02829</id>
    </interactant>
    <interactant intactId="EBI-3704">
        <id>P53858</id>
        <label>BNI4</label>
    </interactant>
    <organismsDiffer>false</organismsDiffer>
    <experiments>2</experiments>
</comment>
<comment type="interaction">
    <interactant intactId="EBI-8659">
        <id>P02829</id>
    </interactant>
    <interactant intactId="EBI-4266">
        <id>P06101</id>
        <label>CDC37</label>
    </interactant>
    <organismsDiffer>false</organismsDiffer>
    <experiments>3</experiments>
</comment>
<comment type="interaction">
    <interactant intactId="EBI-8659">
        <id>P02829</id>
    </interactant>
    <interactant intactId="EBI-4806">
        <id>P33313</id>
        <label>CNS1</label>
    </interactant>
    <organismsDiffer>false</organismsDiffer>
    <experiments>6</experiments>
</comment>
<comment type="interaction">
    <interactant intactId="EBI-8659">
        <id>P02829</id>
    </interactant>
    <interactant intactId="EBI-5429">
        <id>P53691</id>
        <label>CPR6</label>
    </interactant>
    <organismsDiffer>false</organismsDiffer>
    <experiments>13</experiments>
</comment>
<comment type="interaction">
    <interactant intactId="EBI-8659">
        <id>P02829</id>
    </interactant>
    <interactant intactId="EBI-5436">
        <id>P47103</id>
        <label>CPR7</label>
    </interactant>
    <organismsDiffer>false</organismsDiffer>
    <experiments>6</experiments>
</comment>
<comment type="interaction">
    <interactant intactId="EBI-8659">
        <id>P02829</id>
    </interactant>
    <interactant intactId="EBI-8659">
        <id>P02829</id>
        <label>HSP82</label>
    </interactant>
    <organismsDiffer>false</organismsDiffer>
    <experiments>11</experiments>
</comment>
<comment type="interaction">
    <interactant intactId="EBI-8659">
        <id>P02829</id>
    </interactant>
    <interactant intactId="EBI-8750">
        <id>P43581</id>
        <label>HXT10</label>
    </interactant>
    <organismsDiffer>false</organismsDiffer>
    <experiments>2</experiments>
</comment>
<comment type="interaction">
    <interactant intactId="EBI-8659">
        <id>P02829</id>
    </interactant>
    <interactant intactId="EBI-10913">
        <id>P27705</id>
        <label>MIG1</label>
    </interactant>
    <organismsDiffer>false</organismsDiffer>
    <experiments>3</experiments>
</comment>
<comment type="interaction">
    <interactant intactId="EBI-8659">
        <id>P02829</id>
    </interactant>
    <interactant intactId="EBI-11561">
        <id>P35198</id>
        <label>MTH1</label>
    </interactant>
    <organismsDiffer>false</organismsDiffer>
    <experiments>3</experiments>
</comment>
<comment type="interaction">
    <interactant intactId="EBI-8659">
        <id>P02829</id>
    </interactant>
    <interactant intactId="EBI-12202">
        <id>P32832</id>
        <label>NPL6</label>
    </interactant>
    <organismsDiffer>false</organismsDiffer>
    <experiments>2</experiments>
</comment>
<comment type="interaction">
    <interactant intactId="EBI-8659">
        <id>P02829</id>
    </interactant>
    <interactant intactId="EBI-24499">
        <id>P38768</id>
        <label>PIH1</label>
    </interactant>
    <organismsDiffer>false</organismsDiffer>
    <experiments>4</experiments>
</comment>
<comment type="interaction">
    <interactant intactId="EBI-8659">
        <id>P02829</id>
    </interactant>
    <interactant intactId="EBI-32467">
        <id>Q03407</id>
        <label>PKH1</label>
    </interactant>
    <organismsDiffer>false</organismsDiffer>
    <experiments>2</experiments>
</comment>
<comment type="interaction">
    <interactant intactId="EBI-8659">
        <id>P02829</id>
    </interactant>
    <interactant intactId="EBI-13796">
        <id>P53043</id>
        <label>PPT1</label>
    </interactant>
    <organismsDiffer>false</organismsDiffer>
    <experiments>9</experiments>
</comment>
<comment type="interaction">
    <interactant intactId="EBI-8659">
        <id>P02829</id>
    </interactant>
    <interactant intactId="EBI-13879">
        <id>P32264</id>
        <label>PRO1</label>
    </interactant>
    <organismsDiffer>false</organismsDiffer>
    <experiments>3</experiments>
</comment>
<comment type="interaction">
    <interactant intactId="EBI-8659">
        <id>P02829</id>
    </interactant>
    <interactant intactId="EBI-26838">
        <id>P28707</id>
        <label>SBA1</label>
    </interactant>
    <organismsDiffer>false</organismsDiffer>
    <experiments>7</experiments>
</comment>
<comment type="interaction">
    <interactant intactId="EBI-8659">
        <id>P02829</id>
    </interactant>
    <interactant intactId="EBI-4898">
        <id>P41811</id>
        <label>SEC27</label>
    </interactant>
    <organismsDiffer>false</organismsDiffer>
    <experiments>2</experiments>
</comment>
<comment type="interaction">
    <interactant intactId="EBI-8659">
        <id>P02829</id>
    </interactant>
    <interactant intactId="EBI-17070">
        <id>Q08446</id>
        <label>SGT1</label>
    </interactant>
    <organismsDiffer>false</organismsDiffer>
    <experiments>2</experiments>
</comment>
<comment type="interaction">
    <interactant intactId="EBI-8659">
        <id>P02829</id>
    </interactant>
    <interactant intactId="EBI-17372">
        <id>Q00772</id>
        <label>SLT2</label>
    </interactant>
    <organismsDiffer>false</organismsDiffer>
    <experiments>5</experiments>
</comment>
<comment type="interaction">
    <interactant intactId="EBI-8659">
        <id>P02829</id>
    </interactant>
    <interactant intactId="EBI-17457">
        <id>P41808</id>
        <label>SMK1</label>
    </interactant>
    <organismsDiffer>false</organismsDiffer>
    <experiments>3</experiments>
</comment>
<comment type="interaction">
    <interactant intactId="EBI-8659">
        <id>P02829</id>
    </interactant>
    <interactant intactId="EBI-8591">
        <id>P10591</id>
        <label>SSA1</label>
    </interactant>
    <organismsDiffer>false</organismsDiffer>
    <experiments>3</experiments>
</comment>
<comment type="interaction">
    <interactant intactId="EBI-8659">
        <id>P02829</id>
    </interactant>
    <interactant intactId="EBI-8603">
        <id>P10592</id>
        <label>SSA2</label>
    </interactant>
    <organismsDiffer>false</organismsDiffer>
    <experiments>3</experiments>
</comment>
<comment type="interaction">
    <interactant intactId="EBI-8659">
        <id>P02829</id>
    </interactant>
    <interactant intactId="EBI-8648">
        <id>P32589</id>
        <label>SSE1</label>
    </interactant>
    <organismsDiffer>false</organismsDiffer>
    <experiments>3</experiments>
</comment>
<comment type="interaction">
    <interactant intactId="EBI-8659">
        <id>P02829</id>
    </interactant>
    <interactant intactId="EBI-18418">
        <id>P15705</id>
        <label>STI1</label>
    </interactant>
    <organismsDiffer>false</organismsDiffer>
    <experiments>19</experiments>
</comment>
<comment type="interaction">
    <interactant intactId="EBI-8659">
        <id>P02829</id>
    </interactant>
    <interactant intactId="EBI-21956">
        <id>P25638</id>
        <label>TAH1</label>
    </interactant>
    <organismsDiffer>false</organismsDiffer>
    <experiments>10</experiments>
</comment>
<comment type="interaction">
    <interactant intactId="EBI-8659">
        <id>P02829</id>
    </interactant>
    <interactant intactId="EBI-33162">
        <id>Q12407</id>
        <label>YDL199C</label>
    </interactant>
    <organismsDiffer>false</organismsDiffer>
    <experiments>2</experiments>
</comment>
<comment type="interaction">
    <interactant intactId="EBI-8659">
        <id>P02829</id>
    </interactant>
    <interactant intactId="EBI-5419">
        <id>P0CS82</id>
        <label>HAP1</label>
    </interactant>
    <organismsDiffer>true</organismsDiffer>
    <experiments>3</experiments>
</comment>
<comment type="interaction">
    <interactant intactId="EBI-8659">
        <id>P02829</id>
    </interactant>
    <interactant intactId="EBI-366083">
        <id>P04637</id>
        <label>TP53</label>
    </interactant>
    <organismsDiffer>true</organismsDiffer>
    <experiments>8</experiments>
</comment>
<comment type="subcellular location">
    <subcellularLocation>
        <location evidence="10">Cytoplasm</location>
    </subcellularLocation>
</comment>
<comment type="induction">
    <text evidence="20 26">Expressed constitutively and induced by high temperatures dependent on transcription factor HSF1. According to PubMed:2674684, it is constitutively expressed at low levels, however, due to the specificity of the antibody, this result is unsure.</text>
</comment>
<comment type="domain">
    <text>The TPR repeat-binding motif mediates interaction with TPR repeat-containing proteins like the co-chaperones AHA1, CDC37, CNS1, CPR6, CPR7, HCH1, SBA1, SSE1 and STI1. CNS1, CPR6, CPR7 and STI1.</text>
</comment>
<comment type="miscellaneous">
    <text evidence="11">Present with 444943 molecules/cell in log phase SD medium.</text>
</comment>
<comment type="similarity">
    <text evidence="32">Belongs to the heat shock protein 90 family.</text>
</comment>
<sequence length="709" mass="81406">MASETFEFQAEITQLMSLIINTVYSNKEIFLRELISNASDALDKIRYKSLSDPKQLETEPDLFIRITPKPEQKVLEIRDSGIGMTKAELINNLGTIAKSGTKAFMEALSAGADVSMIGQFGVGFYSLFLVADRVQVISKSNDDEQYIWESNAGGSFTVTLDEVNERIGRGTILRLFLKDDQLEYLEEKRIKEVIKRHSEFVAYPIQLVVTKEVEKEVPIPEEEKKDEEKKDEEKKDEDDKKPKLEEVDEEEEKKPKTKKVKEEVQEIEELNKTKPLWTRNPSDITQEEYNAFYKSISNDWEDPLYVKHFSVEGQLEFRAILFIPKRAPFDLFESKKKKNNIKLYVRRVFITDEAEDLIPEWLSFVKGVVDSEDLPLNLSREMLQQNKIMKVIRKNIVKKLIEAFNEIAEDSEQFEKFYSAFSKNIKLGVHEDTQNRAALAKLLRYNSTKSVDELTSLTDYVTRMPEHQKNIYYITGESLKAVEKSPFLDALKAKNFEVLFLTDPIDEYAFTQLKEFEGKTLVDITKDFELEETDEEKAEREKEIKEYEPLTKALKEILGDQVEKVVVSYKLLDAPAAIRTGQFGWSANMERIMKAQALRDSSMSSYMSSKKTFEISPKSPIIKELKKRVDEGGAQDKTVKDLTKLLYETALLTSGFSLDEPTSFASRINRLISLGLNIDEDEETETAPEASTAAPVEEVPADTEMEEVD</sequence>
<gene>
    <name type="primary">HSP82</name>
    <name type="synonym">HSP90</name>
    <name type="ordered locus">YPL240C</name>
</gene>
<reference key="1">
    <citation type="journal article" date="1984" name="J. Biol. Chem.">
        <title>Complete sequence of the heat shock-inducible HSP90 gene of Saccharomyces cerevisiae.</title>
        <authorList>
            <person name="Farrelly F.W."/>
            <person name="Finkelstein D.B."/>
        </authorList>
    </citation>
    <scope>NUCLEOTIDE SEQUENCE</scope>
</reference>
<reference key="2">
    <citation type="journal article" date="1997" name="Nature">
        <title>The nucleotide sequence of Saccharomyces cerevisiae chromosome XVI.</title>
        <authorList>
            <person name="Bussey H."/>
            <person name="Storms R.K."/>
            <person name="Ahmed A."/>
            <person name="Albermann K."/>
            <person name="Allen E."/>
            <person name="Ansorge W."/>
            <person name="Araujo R."/>
            <person name="Aparicio A."/>
            <person name="Barrell B.G."/>
            <person name="Badcock K."/>
            <person name="Benes V."/>
            <person name="Botstein D."/>
            <person name="Bowman S."/>
            <person name="Brueckner M."/>
            <person name="Carpenter J."/>
            <person name="Cherry J.M."/>
            <person name="Chung E."/>
            <person name="Churcher C.M."/>
            <person name="Coster F."/>
            <person name="Davis K."/>
            <person name="Davis R.W."/>
            <person name="Dietrich F.S."/>
            <person name="Delius H."/>
            <person name="DiPaolo T."/>
            <person name="Dubois E."/>
            <person name="Duesterhoeft A."/>
            <person name="Duncan M."/>
            <person name="Floeth M."/>
            <person name="Fortin N."/>
            <person name="Friesen J.D."/>
            <person name="Fritz C."/>
            <person name="Goffeau A."/>
            <person name="Hall J."/>
            <person name="Hebling U."/>
            <person name="Heumann K."/>
            <person name="Hilbert H."/>
            <person name="Hillier L.W."/>
            <person name="Hunicke-Smith S."/>
            <person name="Hyman R.W."/>
            <person name="Johnston M."/>
            <person name="Kalman S."/>
            <person name="Kleine K."/>
            <person name="Komp C."/>
            <person name="Kurdi O."/>
            <person name="Lashkari D."/>
            <person name="Lew H."/>
            <person name="Lin A."/>
            <person name="Lin D."/>
            <person name="Louis E.J."/>
            <person name="Marathe R."/>
            <person name="Messenguy F."/>
            <person name="Mewes H.-W."/>
            <person name="Mirtipati S."/>
            <person name="Moestl D."/>
            <person name="Mueller-Auer S."/>
            <person name="Namath A."/>
            <person name="Nentwich U."/>
            <person name="Oefner P."/>
            <person name="Pearson D."/>
            <person name="Petel F.X."/>
            <person name="Pohl T.M."/>
            <person name="Purnelle B."/>
            <person name="Rajandream M.A."/>
            <person name="Rechmann S."/>
            <person name="Rieger M."/>
            <person name="Riles L."/>
            <person name="Roberts D."/>
            <person name="Schaefer M."/>
            <person name="Scharfe M."/>
            <person name="Scherens B."/>
            <person name="Schramm S."/>
            <person name="Schroeder M."/>
            <person name="Sdicu A.-M."/>
            <person name="Tettelin H."/>
            <person name="Urrestarazu L.A."/>
            <person name="Ushinsky S."/>
            <person name="Vierendeels F."/>
            <person name="Vissers S."/>
            <person name="Voss H."/>
            <person name="Walsh S.V."/>
            <person name="Wambutt R."/>
            <person name="Wang Y."/>
            <person name="Wedler E."/>
            <person name="Wedler H."/>
            <person name="Winnett E."/>
            <person name="Zhong W.-W."/>
            <person name="Zollner A."/>
            <person name="Vo D.H."/>
            <person name="Hani J."/>
        </authorList>
    </citation>
    <scope>NUCLEOTIDE SEQUENCE [LARGE SCALE GENOMIC DNA]</scope>
    <source>
        <strain>ATCC 204508 / S288c</strain>
    </source>
</reference>
<reference key="3">
    <citation type="journal article" date="2014" name="G3 (Bethesda)">
        <title>The reference genome sequence of Saccharomyces cerevisiae: Then and now.</title>
        <authorList>
            <person name="Engel S.R."/>
            <person name="Dietrich F.S."/>
            <person name="Fisk D.G."/>
            <person name="Binkley G."/>
            <person name="Balakrishnan R."/>
            <person name="Costanzo M.C."/>
            <person name="Dwight S.S."/>
            <person name="Hitz B.C."/>
            <person name="Karra K."/>
            <person name="Nash R.S."/>
            <person name="Weng S."/>
            <person name="Wong E.D."/>
            <person name="Lloyd P."/>
            <person name="Skrzypek M.S."/>
            <person name="Miyasato S.R."/>
            <person name="Simison M."/>
            <person name="Cherry J.M."/>
        </authorList>
    </citation>
    <scope>GENOME REANNOTATION</scope>
    <source>
        <strain>ATCC 204508 / S288c</strain>
    </source>
</reference>
<reference key="4">
    <citation type="journal article" date="1989" name="Mol. Cell. Biol.">
        <title>hsp82 is an essential protein that is required in higher concentrations for growth of cells at higher temperatures.</title>
        <authorList>
            <person name="Borkovich K.A."/>
            <person name="Farrelly F.W."/>
            <person name="Finkelstein D.B."/>
            <person name="Taulien J."/>
            <person name="Lindquist S."/>
        </authorList>
    </citation>
    <scope>INDUCTION</scope>
</reference>
<reference key="5">
    <citation type="journal article" date="1993" name="J. Biol. Chem.">
        <title>Hsp90 chaperonins possess ATPase activity and bind heat shock transcription factors and peptidyl prolyl isomerases.</title>
        <authorList>
            <person name="Nadeau K."/>
            <person name="Das A."/>
            <person name="Walsh C.T."/>
        </authorList>
    </citation>
    <scope>ATPASE ACTIVITY</scope>
</reference>
<reference key="6">
    <citation type="journal article" date="1993" name="Proc. Natl. Acad. Sci. U.S.A.">
        <title>Isolation of Hsp90 mutants by screening for decreased steroid receptor function.</title>
        <authorList>
            <person name="Bohen S.P."/>
            <person name="Yamamoto K.R."/>
        </authorList>
    </citation>
    <scope>MUTAGENESIS OF GLY-313; GLU-431; THR-525; ALA-576 AND ARG-579</scope>
</reference>
<reference key="7">
    <citation type="journal article" date="1994" name="J. Biol. Chem.">
        <title>Conservation of Hsp90 macromolecular complexes in Saccharomyces cerevisiae.</title>
        <authorList>
            <person name="Chang H.-C.J."/>
            <person name="Lindquist S."/>
        </authorList>
    </citation>
    <scope>INTERACTION WITH STI1 AND CPR6</scope>
</reference>
<reference key="8">
    <citation type="journal article" date="1995" name="Mol. Cell. Biol.">
        <title>Mutational analysis of Hsp90 function: interactions with a steroid receptor and a protein kinase.</title>
        <authorList>
            <person name="Nathan D.F."/>
            <person name="Lindquist S."/>
        </authorList>
    </citation>
    <scope>MUTAGENESIS OF THR-22; ALA-41; GLY-81; THR-101; GLY-170; GLY-313; GLU-381 AND ALA-587</scope>
</reference>
<reference key="9">
    <citation type="journal article" date="1996" name="Science">
        <title>A cyclophilin function in Hsp90-dependent signal transduction.</title>
        <authorList>
            <person name="Duina A.A."/>
            <person name="Chang H.-C.J."/>
            <person name="Marsh J.A."/>
            <person name="Lindquist S."/>
            <person name="Gaber R.F."/>
        </authorList>
    </citation>
    <scope>INTERACTION WITH CPR6 AND CPR7</scope>
</reference>
<reference key="10">
    <citation type="journal article" date="1997" name="J. Cell Sci.">
        <title>A yeast heat shock transcription factor (Hsf1) mutant is defective in both Hsc82/Hsp82 synthesis and spindle pole body duplication.</title>
        <authorList>
            <person name="Zarzov P."/>
            <person name="Boucherie H."/>
            <person name="Mann C."/>
        </authorList>
    </citation>
    <scope>INDUCTION</scope>
</reference>
<reference key="11">
    <citation type="journal article" date="1998" name="J. Cell Biol.">
        <title>In vivo function of Hsp90 is dependent on ATP binding and ATP hydrolysis.</title>
        <authorList>
            <person name="Obermann W.M."/>
            <person name="Sondermann H."/>
            <person name="Russo A.A."/>
            <person name="Pavletich N.P."/>
            <person name="Hartl F.U."/>
        </authorList>
    </citation>
    <scope>INTERACTION WITH SBA1</scope>
</reference>
<reference key="12">
    <citation type="journal article" date="1998" name="Mol. Cell. Biol.">
        <title>SBA1 encodes a yeast hsp90 cochaperone that is homologous to vertebrate p23 proteins.</title>
        <authorList>
            <person name="Fang Y."/>
            <person name="Fliss A.E."/>
            <person name="Rao J."/>
            <person name="Caplan A.J."/>
        </authorList>
    </citation>
    <scope>INTERACTION WITH SBA1</scope>
    <scope>MUTAGENESIS OF ALA-97 AND SER-485</scope>
</reference>
<reference key="13">
    <citation type="journal article" date="1998" name="Mol. Cell. Biol.">
        <title>Molecular mechanism governing heme signaling in yeast: a higher-order complex mediates heme regulation of the transcriptional activator HAP1.</title>
        <authorList>
            <person name="Zhang L."/>
            <person name="Hach A."/>
            <person name="Wang C."/>
        </authorList>
    </citation>
    <scope>INTERACTION WITH HAP1</scope>
</reference>
<reference key="14">
    <citation type="journal article" date="1998" name="Mol. Cell. Biol.">
        <title>CNS1 encodes an essential p60/Sti1 homolog in Saccharomyces cerevisiae that suppresses cyclophilin 40 mutations and interacts with Hsp90.</title>
        <authorList>
            <person name="Dolinski K.J."/>
            <person name="Cardenas M.E."/>
            <person name="Heitman J."/>
        </authorList>
    </citation>
    <scope>INTERACTION WITH CNS1</scope>
</reference>
<reference key="15">
    <citation type="journal article" date="1999" name="J. Biol. Chem.">
        <title>The yeast Hsp110 family member, Sse1, is an Hsp90 cochaperone.</title>
        <authorList>
            <person name="Liu X.-D."/>
            <person name="Morano K.A."/>
            <person name="Thiele D.J."/>
        </authorList>
    </citation>
    <scope>INTERACTION WITH SSE1</scope>
</reference>
<reference key="16">
    <citation type="journal article" date="1999" name="Mol. Cell. Biol.">
        <title>Hsp90 binds and regulates Gcn2, the ligand-inducible kinase of the alpha subunit of eukaryotic translation initiation factor 2.</title>
        <authorList>
            <person name="Donze O."/>
            <person name="Picard D."/>
        </authorList>
    </citation>
    <scope>INTERACTION WITH GCN2</scope>
</reference>
<reference key="17">
    <citation type="journal article" date="2000" name="Cell">
        <title>Structure of TPR domain-peptide complexes: critical elements in the assembly of the Hsp70-Hsp90 multichaperone machine.</title>
        <authorList>
            <person name="Scheufler C."/>
            <person name="Brinker A."/>
            <person name="Bourenkov G."/>
            <person name="Pegoraro S."/>
            <person name="Moroder L."/>
            <person name="Bartunik H."/>
            <person name="Hartl F.U."/>
            <person name="Moarefi I."/>
        </authorList>
    </citation>
    <scope>BINDING TO TPR REPEATS</scope>
</reference>
<reference key="18">
    <citation type="journal article" date="2000" name="EMBO J.">
        <title>The ATPase cycle of Hsp90 drives a molecular 'clamp' via transient dimerization of the N-terminal domains.</title>
        <authorList>
            <person name="Prodromou C."/>
            <person name="Panaretou B."/>
            <person name="Chohan S."/>
            <person name="Siligardi G."/>
            <person name="O'Brien R."/>
            <person name="Ladbury J.E."/>
            <person name="Roe S.M."/>
            <person name="Piper P.W."/>
            <person name="Pearl L.H."/>
        </authorList>
    </citation>
    <scope>ATPASE ACTIVITY</scope>
    <scope>MUTAGENESIS OF ALA-107</scope>
</reference>
<reference key="19">
    <citation type="journal article" date="2000" name="FEBS Lett.">
        <title>The molecular chaperone Cdc37 is required for Ste11 function and pheromone-induced cell cycle arrest.</title>
        <authorList>
            <person name="Abbas-Terki T."/>
            <person name="Donze O."/>
            <person name="Picard D."/>
        </authorList>
    </citation>
    <scope>INTERACTION WITH CDC37 AND STE11</scope>
</reference>
<reference key="20">
    <citation type="journal article" date="2002" name="Mol. Cell">
        <title>Activation of the ATPase activity of hsp90 by the stress-regulated cochaperone aha1.</title>
        <authorList>
            <person name="Panaretou B."/>
            <person name="Siligardi G."/>
            <person name="Meyer P."/>
            <person name="Maloney A."/>
            <person name="Sullivan J.K."/>
            <person name="Singh S."/>
            <person name="Millson S.H."/>
            <person name="Clarke P.A."/>
            <person name="Naaby-Hansen S."/>
            <person name="Stein R."/>
            <person name="Cramer R."/>
            <person name="Mollapour M."/>
            <person name="Workman P."/>
            <person name="Piper P.W."/>
            <person name="Pearl L.H."/>
            <person name="Prodromou C."/>
        </authorList>
    </citation>
    <scope>INTERACTION WITH AHA1 AND HCH1</scope>
</reference>
<reference key="21">
    <citation type="journal article" date="2003" name="Nature">
        <title>Global analysis of protein localization in budding yeast.</title>
        <authorList>
            <person name="Huh W.-K."/>
            <person name="Falvo J.V."/>
            <person name="Gerke L.C."/>
            <person name="Carroll A.S."/>
            <person name="Howson R.W."/>
            <person name="Weissman J.S."/>
            <person name="O'Shea E.K."/>
        </authorList>
    </citation>
    <scope>SUBCELLULAR LOCATION [LARGE SCALE ANALYSIS]</scope>
</reference>
<reference key="22">
    <citation type="journal article" date="2003" name="Nature">
        <title>Global analysis of protein expression in yeast.</title>
        <authorList>
            <person name="Ghaemmaghami S."/>
            <person name="Huh W.-K."/>
            <person name="Bower K."/>
            <person name="Howson R.W."/>
            <person name="Belle A."/>
            <person name="Dephoure N."/>
            <person name="O'Shea E.K."/>
            <person name="Weissman J.S."/>
        </authorList>
    </citation>
    <scope>LEVEL OF PROTEIN EXPRESSION [LARGE SCALE ANALYSIS]</scope>
</reference>
<reference key="23">
    <citation type="journal article" date="2008" name="Development">
        <title>The ATPase-dependent chaperoning activity of Hsp90a regulates thick filament formation and integration during skeletal muscle myofibrillogenesis.</title>
        <authorList>
            <person name="Hawkins T.A."/>
            <person name="Haramis A.P."/>
            <person name="Etard C."/>
            <person name="Prodromou C."/>
            <person name="Vaughan C.K."/>
            <person name="Ashworth R."/>
            <person name="Ray S."/>
            <person name="Behra M."/>
            <person name="Holder N."/>
            <person name="Talbot W.S."/>
            <person name="Pearl L.H."/>
            <person name="Strahle U."/>
            <person name="Wilson S.W."/>
        </authorList>
    </citation>
    <scope>MUTAGENESIS OF GLY-83</scope>
</reference>
<reference key="24">
    <citation type="journal article" date="2008" name="Mol. Cell. Proteomics">
        <title>A multidimensional chromatography technology for in-depth phosphoproteome analysis.</title>
        <authorList>
            <person name="Albuquerque C.P."/>
            <person name="Smolka M.B."/>
            <person name="Payne S.H."/>
            <person name="Bafna V."/>
            <person name="Eng J."/>
            <person name="Zhou H."/>
        </authorList>
    </citation>
    <scope>IDENTIFICATION BY MASS SPECTROMETRY [LARGE SCALE ANALYSIS]</scope>
</reference>
<reference evidence="34 35" key="25">
    <citation type="journal article" date="1997" name="Nat. Struct. Biol.">
        <title>A molecular clamp in the crystal structure of the N-terminal domain of the yeast Hsp90 chaperone.</title>
        <authorList>
            <person name="Prodromou C."/>
            <person name="Roe S.M."/>
            <person name="Piper P.W."/>
            <person name="Pearl L.H."/>
        </authorList>
    </citation>
    <scope>X-RAY CRYSTALLOGRAPHY (1.8 ANGSTROMS)</scope>
</reference>
<reference evidence="33 36 37" key="26">
    <citation type="journal article" date="1997" name="Cell">
        <title>Identification and structural characterization of the ATP/ADP-binding site in the Hsp90 molecular chaperone.</title>
        <authorList>
            <person name="Prodromou C."/>
            <person name="Roe S.M."/>
            <person name="O'Brien R."/>
            <person name="Ladbury J.E."/>
            <person name="Piper P.W."/>
            <person name="Pearl L.H."/>
        </authorList>
    </citation>
    <scope>X-RAY CRYSTALLOGRAPHY (1.85 ANGSTROMS) OF 2-214 IN COMPLEX WITH ADP AND GELDANAMYCIN</scope>
</reference>
<reference key="27">
    <citation type="journal article" date="2003" name="Mol. Cell">
        <title>Structural and functional analysis of the middle segment of hsp90: implications for ATP hydrolysis and client protein and cochaperone interactions.</title>
        <authorList>
            <person name="Meyer P."/>
            <person name="Prodromou C."/>
            <person name="Hu B."/>
            <person name="Vaughan C.K."/>
            <person name="Roe S.M."/>
            <person name="Panaretou B."/>
            <person name="Piper P.W."/>
            <person name="Pearl L.H."/>
        </authorList>
    </citation>
    <scope>X-RAY CRYSTALLOGRAPHY (2.5 ANGSTROMS) OF 273-560</scope>
    <scope>MUTAGENESIS OF PHE-349; ARG-380 AND GLN-384</scope>
</reference>
<reference evidence="38" key="28">
    <citation type="journal article" date="2004" name="Cell">
        <title>The Mechanism of Hsp90 regulation by the protein kinase-specific cochaperone p50(cdc37).</title>
        <authorList>
            <person name="Roe S.M."/>
            <person name="Ali M.M."/>
            <person name="Meyer P."/>
            <person name="Vaughan C.K."/>
            <person name="Panaretou B."/>
            <person name="Piper P.W."/>
            <person name="Prodromou C."/>
            <person name="Pearl L.H."/>
        </authorList>
    </citation>
    <scope>X-RAY CRYSTALLOGRAPHY (2.3 ANGSTROMS) OF 1-214 IN COMPLEX WITH HUMAN CDC37</scope>
</reference>
<reference evidence="39 40" key="29">
    <citation type="journal article" date="2004" name="EMBO J.">
        <title>Structural basis for recruitment of the ATPase activator Aha1 to the Hsp90 chaperone machinery.</title>
        <authorList>
            <person name="Meyer P."/>
        </authorList>
    </citation>
    <scope>X-RAY CRYSTALLOGRAPHY (2.15 ANGSTROMS) OF 272-530 IN COMPLEX WITH AHA1</scope>
    <scope>MUTAGENESIS OF LYS-387</scope>
</reference>
<reference key="30">
    <citation type="journal article" date="2004" name="EMBO J.">
        <authorList>
            <person name="Meyer P."/>
            <person name="Prodromou C."/>
            <person name="Liao C."/>
            <person name="Hu B."/>
            <person name="Mark Roe S."/>
            <person name="Vaughan C.K."/>
            <person name="Vlasic I."/>
            <person name="Panaretou B."/>
            <person name="Piper P.W."/>
            <person name="Pearl L.H."/>
        </authorList>
    </citation>
    <scope>ERRATUM OF PUBMED:14739935</scope>
</reference>
<reference key="31">
    <citation type="journal article" date="2009" name="EMBO Rep.">
        <title>Hsp90 is regulated by a switch point in the C-terminal domain.</title>
        <authorList>
            <person name="Retzlaff M."/>
            <person name="Stahl M."/>
            <person name="Eberl H.C."/>
            <person name="Lagleder S."/>
            <person name="Beck J."/>
            <person name="Kessler H."/>
            <person name="Buchner J."/>
        </authorList>
    </citation>
    <scope>MUTAGENESIS OF ALA-577</scope>
</reference>
<reference key="32">
    <citation type="journal article" date="1999" name="J. Med. Chem.">
        <title>Structural basis for inhibition of the Hsp90 molecular chaperone by the antitumor antibiotics radicicol and geldanamycin.</title>
        <authorList>
            <person name="Roe S.M."/>
            <person name="Prodromou C."/>
            <person name="O'Brien R."/>
            <person name="Ladbury J.E."/>
            <person name="Piper P.W."/>
            <person name="Pearl L.H."/>
        </authorList>
    </citation>
    <scope>X-RAY CRYSTALLOGRAPHY (2.50 ANGSTROMS) OF 1-214 IN COMPLEX WITH RADICICOL</scope>
    <scope>ATPASE ACTIVITY</scope>
</reference>
<reference key="33">
    <citation type="journal article" date="2006" name="Chem. Biol.">
        <title>Inhibition of Hsp90 with synthetic macrolactones: synthesis and structural and biological evaluation of ring and conformational analogs of radicicol.</title>
        <authorList>
            <person name="Proisy N."/>
            <person name="Sharp S.Y."/>
            <person name="Boxall K."/>
            <person name="Connelly S."/>
            <person name="Roe S.M."/>
            <person name="Prodromou C."/>
            <person name="Slawin A.M."/>
            <person name="Pearl L.H."/>
            <person name="Workman P."/>
            <person name="Moody C.J."/>
        </authorList>
    </citation>
    <scope>X-RAY CRYSTALLOGRAPHY (1.50 ANGSTROMS) OF 1-214 IN COMPLEX WITH INHIBITORS</scope>
    <scope>FUNCTION</scope>
</reference>
<reference key="34">
    <citation type="journal article" date="2006" name="J. Biol. Chem.">
        <title>Intrinsic inhibition of the Hsp90 ATPase activity.</title>
        <authorList>
            <person name="Richter K."/>
            <person name="Moser S."/>
            <person name="Hagn F."/>
            <person name="Friedrich R."/>
            <person name="Hainzl O."/>
            <person name="Heller M."/>
            <person name="Schlee S."/>
            <person name="Kessler H."/>
            <person name="Reinstein J."/>
            <person name="Buchner J."/>
        </authorList>
    </citation>
    <scope>X-RAY CRYSTALLOGRAPHY (1.94 ANGSTROMS) OF 25-210</scope>
    <scope>ATPASE ACTIVITY</scope>
</reference>
<reference key="35">
    <citation type="journal article" date="2006" name="Nature">
        <title>Crystal structure of an Hsp90-nucleotide-p23/Sba1 closed chaperone complex.</title>
        <authorList>
            <person name="Ali M.M."/>
            <person name="Roe S.M."/>
            <person name="Vaughan C.K."/>
            <person name="Meyer P."/>
            <person name="Panaretou B."/>
            <person name="Piper P.W."/>
            <person name="Prodromou C."/>
            <person name="Pearl L.H."/>
        </authorList>
    </citation>
    <scope>X-RAY CRYSTALLOGRAPHY (3.10 ANGSTROMS) OF 1-677 IN COMPLEX WITH SBA1 AND ATP</scope>
    <scope>SUBUNIT</scope>
</reference>
<reference key="36">
    <citation type="journal article" date="2008" name="J. Med. Chem.">
        <title>Molecular characterization of macbecin as an Hsp90 inhibitor.</title>
        <authorList>
            <person name="Martin C.J."/>
            <person name="Gaisser S."/>
            <person name="Challis I.R."/>
            <person name="Carletti I."/>
            <person name="Wilkinson B."/>
            <person name="Gregory M."/>
            <person name="Prodromou C."/>
            <person name="Roe S.M."/>
            <person name="Pearl L.H."/>
            <person name="Boyd S.M."/>
            <person name="Zhang M.Q."/>
        </authorList>
    </citation>
    <scope>X-RAY CRYSTALLOGRAPHY (2.40 ANGSTROMS) OF 1-219 IN COMPLEX WITH INHIBITOR</scope>
    <scope>ATPASE ACTIVITY</scope>
</reference>
<reference key="37">
    <citation type="journal article" date="2009" name="ACS Chem. Biol.">
        <title>Structural basis of the radicicol resistance displayed by a fungal hsp90.</title>
        <authorList>
            <person name="Prodromou C."/>
            <person name="Nuttall J.M."/>
            <person name="Millson S.H."/>
            <person name="Roe S.M."/>
            <person name="Sim T.S."/>
            <person name="Tan D."/>
            <person name="Workman P."/>
            <person name="Pearl L.H."/>
            <person name="Piper P.W."/>
        </authorList>
    </citation>
    <scope>X-RAY CRYSTALLOGRAPHY (1.60 ANGSTROMS) OF 1-220 IN COMPLEX WITH ADP; GELDANAMYCIN AND RADICICOL</scope>
</reference>
<name>HSP82_YEAST</name>
<feature type="chain" id="PRO_0000062957" description="ATP-dependent molecular chaperone HSP82">
    <location>
        <begin position="1"/>
        <end position="709"/>
    </location>
</feature>
<feature type="repeat" description="1" evidence="6">
    <location>
        <begin position="221"/>
        <end position="225"/>
    </location>
</feature>
<feature type="repeat" description="2" evidence="6">
    <location>
        <begin position="226"/>
        <end position="230"/>
    </location>
</feature>
<feature type="repeat" description="3" evidence="6">
    <location>
        <begin position="231"/>
        <end position="235"/>
    </location>
</feature>
<feature type="repeat" description="4" evidence="6">
    <location>
        <begin position="237"/>
        <end position="241"/>
    </location>
</feature>
<feature type="repeat" description="5" evidence="6">
    <location>
        <begin position="250"/>
        <end position="254"/>
    </location>
</feature>
<feature type="region of interest" description="Disordered" evidence="2">
    <location>
        <begin position="219"/>
        <end position="262"/>
    </location>
</feature>
<feature type="region of interest" description="5 X 5 AA repeats of [DE]-[DE]-[DE]-K-K; highly charged region">
    <location>
        <begin position="221"/>
        <end position="263"/>
    </location>
</feature>
<feature type="region of interest" description="Disordered" evidence="2">
    <location>
        <begin position="679"/>
        <end position="709"/>
    </location>
</feature>
<feature type="short sequence motif" description="TPR repeat-binding">
    <location>
        <begin position="705"/>
        <end position="709"/>
    </location>
</feature>
<feature type="compositionally biased region" description="Basic and acidic residues" evidence="2">
    <location>
        <begin position="219"/>
        <end position="245"/>
    </location>
</feature>
<feature type="compositionally biased region" description="Low complexity" evidence="2">
    <location>
        <begin position="687"/>
        <end position="698"/>
    </location>
</feature>
<feature type="compositionally biased region" description="Acidic residues" evidence="2">
    <location>
        <begin position="699"/>
        <end position="709"/>
    </location>
</feature>
<feature type="binding site" evidence="14 41">
    <location>
        <position position="33"/>
    </location>
    <ligand>
        <name>ATP</name>
        <dbReference type="ChEBI" id="CHEBI:30616"/>
    </ligand>
</feature>
<feature type="binding site" evidence="14 25 36 37 41 42">
    <location>
        <position position="37"/>
    </location>
    <ligand>
        <name>ATP</name>
        <dbReference type="ChEBI" id="CHEBI:30616"/>
    </ligand>
</feature>
<feature type="binding site" evidence="14 25 36 37 41 42">
    <location>
        <position position="79"/>
    </location>
    <ligand>
        <name>ATP</name>
        <dbReference type="ChEBI" id="CHEBI:30616"/>
    </ligand>
</feature>
<feature type="binding site" evidence="14 41">
    <location>
        <position position="84"/>
    </location>
    <ligand>
        <name>ATP</name>
        <dbReference type="ChEBI" id="CHEBI:30616"/>
    </ligand>
</feature>
<feature type="binding site" evidence="14 41">
    <location>
        <position position="92"/>
    </location>
    <ligand>
        <name>ATP</name>
        <dbReference type="ChEBI" id="CHEBI:30616"/>
    </ligand>
</feature>
<feature type="binding site" evidence="14 41">
    <location>
        <position position="98"/>
    </location>
    <ligand>
        <name>ATP</name>
        <dbReference type="ChEBI" id="CHEBI:30616"/>
    </ligand>
</feature>
<feature type="binding site" evidence="14 41">
    <location>
        <begin position="99"/>
        <end position="100"/>
    </location>
    <ligand>
        <name>ATP</name>
        <dbReference type="ChEBI" id="CHEBI:30616"/>
    </ligand>
</feature>
<feature type="binding site" evidence="14 25 36 37 41 42">
    <location>
        <begin position="119"/>
        <end position="124"/>
    </location>
    <ligand>
        <name>ATP</name>
        <dbReference type="ChEBI" id="CHEBI:30616"/>
    </ligand>
</feature>
<feature type="binding site" evidence="14 41">
    <location>
        <position position="171"/>
    </location>
    <ligand>
        <name>ATP</name>
        <dbReference type="ChEBI" id="CHEBI:30616"/>
    </ligand>
</feature>
<feature type="binding site" evidence="14 41">
    <location>
        <position position="380"/>
    </location>
    <ligand>
        <name>ATP</name>
        <dbReference type="ChEBI" id="CHEBI:30616"/>
    </ligand>
</feature>
<feature type="modified residue" description="Phosphoserine" evidence="1">
    <location>
        <position position="657"/>
    </location>
</feature>
<feature type="mutagenesis site" description="Induces a 6-fold increase in ATPase activity and a reduced client protein activation activity, leading to growth defect at high temperatures." evidence="21">
    <original>T</original>
    <variation>I</variation>
    <location>
        <position position="22"/>
    </location>
</feature>
<feature type="mutagenesis site" description="Causes a 98% reduction in ATPase activity and a reduced client protein activation activity, leading to growth defect at high temperatures." evidence="21">
    <original>A</original>
    <variation>V</variation>
    <location>
        <position position="41"/>
    </location>
</feature>
<feature type="mutagenesis site" description="Reduces client protein activation activity, leading to growth defect at high temperatures." evidence="21">
    <original>G</original>
    <variation>S</variation>
    <location>
        <position position="81"/>
    </location>
</feature>
<feature type="mutagenesis site" description="Abolishes ATPase activity." evidence="16">
    <original>G</original>
    <variation>D</variation>
    <location>
        <position position="83"/>
    </location>
</feature>
<feature type="mutagenesis site" description="Abolishes interaction with SBA1." evidence="27">
    <original>A</original>
    <variation>I</variation>
    <location>
        <position position="97"/>
    </location>
</feature>
<feature type="mutagenesis site" description="Causes a 90% reduction in ATPase activity and a reduced client protein activation activity, leading to growth defect at high temperatures." evidence="21">
    <original>T</original>
    <variation>I</variation>
    <location>
        <position position="101"/>
    </location>
</feature>
<feature type="mutagenesis site" description="Induces a 6-fold increase in ATPase activity." evidence="7">
    <original>A</original>
    <variation>N</variation>
    <location>
        <position position="107"/>
    </location>
</feature>
<feature type="mutagenesis site" description="Induces a total loss of function at 34 degrees Celsius. Abolishes interaction with SBA1." evidence="21">
    <original>G</original>
    <variation>D</variation>
    <location>
        <position position="170"/>
    </location>
</feature>
<feature type="mutagenesis site" description="Reduces client protein activation activity, leading to growth defect at high temperatures." evidence="21 23">
    <original>G</original>
    <variation>N</variation>
    <variation>S</variation>
    <location>
        <position position="313"/>
    </location>
</feature>
<feature type="mutagenesis site" description="Induces a loss of ATPase activity. Can be reactivated by AHA1." evidence="9">
    <original>F</original>
    <variation>A</variation>
    <variation>Q</variation>
    <location>
        <position position="349"/>
    </location>
</feature>
<feature type="mutagenesis site" description="Induces a loss of ATPase activity." evidence="9">
    <original>R</original>
    <variation>A</variation>
    <location>
        <position position="380"/>
    </location>
</feature>
<feature type="mutagenesis site" description="Reduces client protein activation activity. Resistant to ATPase activation by AHA1." evidence="21">
    <original>E</original>
    <variation>K</variation>
    <location>
        <position position="381"/>
    </location>
</feature>
<feature type="mutagenesis site" description="Induces a loss of ATPase activity." evidence="9">
    <original>Q</original>
    <variation>A</variation>
    <location>
        <position position="384"/>
    </location>
</feature>
<feature type="mutagenesis site" description="Decreases AHA1 binding affinity, but has no effect on client protein activation activity." evidence="13">
    <original>K</original>
    <variation>A</variation>
    <location>
        <position position="387"/>
    </location>
</feature>
<feature type="mutagenesis site" description="Decreases AHA1 binding affinity and substantially reduces client protein activation activity." evidence="13">
    <original>K</original>
    <variation>D</variation>
    <location>
        <position position="387"/>
    </location>
</feature>
<feature type="mutagenesis site" description="Specifically reduces the activation of the exogenous ligand glucocorticoid receptor." evidence="23">
    <original>E</original>
    <variation>K</variation>
    <location>
        <position position="431"/>
    </location>
</feature>
<feature type="mutagenesis site" description="Abolishes interaction with SBA1." evidence="27">
    <original>S</original>
    <variation>Y</variation>
    <location>
        <position position="485"/>
    </location>
</feature>
<feature type="mutagenesis site" description="Abolishes interaction with SBA1. Reduces client protein activation activity, leading to growth defect at high temperatures." evidence="23">
    <original>T</original>
    <variation>I</variation>
    <location>
        <position position="525"/>
    </location>
</feature>
<feature type="mutagenesis site" description="Reduces client protein activation activity; when associated with K-579." evidence="23">
    <original>A</original>
    <variation>T</variation>
    <location>
        <position position="576"/>
    </location>
</feature>
<feature type="mutagenesis site" description="Enhances ATPase activity and client protein activation." evidence="19">
    <original>A</original>
    <variation>C</variation>
    <location>
        <position position="577"/>
    </location>
</feature>
<feature type="mutagenesis site" description="Reduces ATPase activity and client protein activation." evidence="19">
    <original>A</original>
    <variation>D</variation>
    <location>
        <position position="577"/>
    </location>
</feature>
<feature type="mutagenesis site" description="Enhances homodimerization, ATPase activity and client protein activation." evidence="19">
    <original>A</original>
    <variation>I</variation>
    <location>
        <position position="577"/>
    </location>
</feature>
<feature type="mutagenesis site" description="Reduces homodimerization, ATPase activity and client protein activation." evidence="19">
    <original>A</original>
    <variation>N</variation>
    <location>
        <position position="577"/>
    </location>
</feature>
<feature type="mutagenesis site" description="Reduces client protein activation activity; when associated with T-576." evidence="23">
    <original>R</original>
    <variation>K</variation>
    <location>
        <position position="579"/>
    </location>
</feature>
<feature type="mutagenesis site" description="No effect on ATPase activity. Reduces client protein activation activity, leading to growth defect at high temperatures." evidence="21">
    <original>A</original>
    <variation>T</variation>
    <location>
        <position position="587"/>
    </location>
</feature>
<feature type="sequence conflict" description="In Ref. 27." evidence="32" ref="27">
    <original>A</original>
    <variation>S</variation>
    <location>
        <position position="481"/>
    </location>
</feature>
<feature type="strand" evidence="49">
    <location>
        <begin position="4"/>
        <end position="7"/>
    </location>
</feature>
<feature type="helix" evidence="49">
    <location>
        <begin position="10"/>
        <end position="21"/>
    </location>
</feature>
<feature type="helix" evidence="50">
    <location>
        <begin position="26"/>
        <end position="28"/>
    </location>
</feature>
<feature type="helix" evidence="49">
    <location>
        <begin position="29"/>
        <end position="48"/>
    </location>
</feature>
<feature type="turn" evidence="49">
    <location>
        <begin position="49"/>
        <end position="51"/>
    </location>
</feature>
<feature type="helix" evidence="49">
    <location>
        <begin position="53"/>
        <end position="56"/>
    </location>
</feature>
<feature type="strand" evidence="49">
    <location>
        <begin position="64"/>
        <end position="69"/>
    </location>
</feature>
<feature type="helix" evidence="49">
    <location>
        <begin position="70"/>
        <end position="72"/>
    </location>
</feature>
<feature type="strand" evidence="49">
    <location>
        <begin position="74"/>
        <end position="79"/>
    </location>
</feature>
<feature type="helix" evidence="49">
    <location>
        <begin position="86"/>
        <end position="93"/>
    </location>
</feature>
<feature type="turn" evidence="46">
    <location>
        <begin position="95"/>
        <end position="97"/>
    </location>
</feature>
<feature type="helix" evidence="49">
    <location>
        <begin position="101"/>
        <end position="110"/>
    </location>
</feature>
<feature type="helix" evidence="49">
    <location>
        <begin position="114"/>
        <end position="120"/>
    </location>
</feature>
<feature type="helix" evidence="49">
    <location>
        <begin position="123"/>
        <end position="129"/>
    </location>
</feature>
<feature type="strand" evidence="49">
    <location>
        <begin position="131"/>
        <end position="139"/>
    </location>
</feature>
<feature type="strand" evidence="49">
    <location>
        <begin position="146"/>
        <end position="150"/>
    </location>
</feature>
<feature type="strand" evidence="49">
    <location>
        <begin position="152"/>
        <end position="160"/>
    </location>
</feature>
<feature type="strand" evidence="49">
    <location>
        <begin position="162"/>
        <end position="164"/>
    </location>
</feature>
<feature type="strand" evidence="49">
    <location>
        <begin position="168"/>
        <end position="177"/>
    </location>
</feature>
<feature type="helix" evidence="49">
    <location>
        <begin position="182"/>
        <end position="185"/>
    </location>
</feature>
<feature type="helix" evidence="49">
    <location>
        <begin position="187"/>
        <end position="197"/>
    </location>
</feature>
<feature type="strand" evidence="45">
    <location>
        <begin position="200"/>
        <end position="203"/>
    </location>
</feature>
<feature type="strand" evidence="49">
    <location>
        <begin position="205"/>
        <end position="207"/>
    </location>
</feature>
<feature type="helix" evidence="44">
    <location>
        <begin position="276"/>
        <end position="278"/>
    </location>
</feature>
<feature type="helix" evidence="44">
    <location>
        <begin position="281"/>
        <end position="283"/>
    </location>
</feature>
<feature type="helix" evidence="44">
    <location>
        <begin position="286"/>
        <end position="297"/>
    </location>
</feature>
<feature type="strand" evidence="44">
    <location>
        <begin position="304"/>
        <end position="311"/>
    </location>
</feature>
<feature type="strand" evidence="44">
    <location>
        <begin position="313"/>
        <end position="315"/>
    </location>
</feature>
<feature type="strand" evidence="44">
    <location>
        <begin position="317"/>
        <end position="323"/>
    </location>
</feature>
<feature type="turn" evidence="44">
    <location>
        <begin position="329"/>
        <end position="332"/>
    </location>
</feature>
<feature type="strand" evidence="47">
    <location>
        <begin position="335"/>
        <end position="337"/>
    </location>
</feature>
<feature type="strand" evidence="44">
    <location>
        <begin position="341"/>
        <end position="345"/>
    </location>
</feature>
<feature type="strand" evidence="44">
    <location>
        <begin position="348"/>
        <end position="352"/>
    </location>
</feature>
<feature type="strand" evidence="43">
    <location>
        <begin position="355"/>
        <end position="358"/>
    </location>
</feature>
<feature type="helix" evidence="44">
    <location>
        <begin position="360"/>
        <end position="362"/>
    </location>
</feature>
<feature type="strand" evidence="44">
    <location>
        <begin position="366"/>
        <end position="373"/>
    </location>
</feature>
<feature type="helix" evidence="43">
    <location>
        <begin position="380"/>
        <end position="383"/>
    </location>
</feature>
<feature type="helix" evidence="44">
    <location>
        <begin position="387"/>
        <end position="408"/>
    </location>
</feature>
<feature type="helix" evidence="44">
    <location>
        <begin position="411"/>
        <end position="431"/>
    </location>
</feature>
<feature type="turn" evidence="44">
    <location>
        <begin position="433"/>
        <end position="435"/>
    </location>
</feature>
<feature type="helix" evidence="44">
    <location>
        <begin position="436"/>
        <end position="440"/>
    </location>
</feature>
<feature type="strand" evidence="44">
    <location>
        <begin position="444"/>
        <end position="447"/>
    </location>
</feature>
<feature type="strand" evidence="44">
    <location>
        <begin position="450"/>
        <end position="456"/>
    </location>
</feature>
<feature type="helix" evidence="44">
    <location>
        <begin position="457"/>
        <end position="462"/>
    </location>
</feature>
<feature type="strand" evidence="44">
    <location>
        <begin position="470"/>
        <end position="475"/>
    </location>
</feature>
<feature type="helix" evidence="44">
    <location>
        <begin position="479"/>
        <end position="483"/>
    </location>
</feature>
<feature type="helix" evidence="44">
    <location>
        <begin position="488"/>
        <end position="493"/>
    </location>
</feature>
<feature type="strand" evidence="44">
    <location>
        <begin position="498"/>
        <end position="501"/>
    </location>
</feature>
<feature type="helix" evidence="44">
    <location>
        <begin position="504"/>
        <end position="513"/>
    </location>
</feature>
<feature type="strand" evidence="44">
    <location>
        <begin position="519"/>
        <end position="523"/>
    </location>
</feature>
<feature type="turn" evidence="43">
    <location>
        <begin position="524"/>
        <end position="526"/>
    </location>
</feature>
<feature type="strand" evidence="48">
    <location>
        <begin position="530"/>
        <end position="533"/>
    </location>
</feature>
<feature type="helix" evidence="51">
    <location>
        <begin position="536"/>
        <end position="546"/>
    </location>
</feature>
<feature type="helix" evidence="51">
    <location>
        <begin position="548"/>
        <end position="558"/>
    </location>
</feature>
<feature type="helix" evidence="51">
    <location>
        <begin position="559"/>
        <end position="561"/>
    </location>
</feature>
<feature type="strand" evidence="51">
    <location>
        <begin position="563"/>
        <end position="567"/>
    </location>
</feature>
<feature type="strand" evidence="51">
    <location>
        <begin position="573"/>
        <end position="580"/>
    </location>
</feature>
<feature type="strand" evidence="48">
    <location>
        <begin position="582"/>
        <end position="584"/>
    </location>
</feature>
<feature type="helix" evidence="51">
    <location>
        <begin position="587"/>
        <end position="595"/>
    </location>
</feature>
<feature type="strand" evidence="48">
    <location>
        <begin position="600"/>
        <end position="602"/>
    </location>
</feature>
<feature type="strand" evidence="51">
    <location>
        <begin position="611"/>
        <end position="615"/>
    </location>
</feature>
<feature type="helix" evidence="51">
    <location>
        <begin position="620"/>
        <end position="630"/>
    </location>
</feature>
<feature type="helix" evidence="48">
    <location>
        <begin position="633"/>
        <end position="635"/>
    </location>
</feature>
<feature type="helix" evidence="51">
    <location>
        <begin position="637"/>
        <end position="653"/>
    </location>
</feature>
<feature type="helix" evidence="51">
    <location>
        <begin position="661"/>
        <end position="674"/>
    </location>
</feature>
<evidence type="ECO:0000250" key="1">
    <source>
        <dbReference type="UniProtKB" id="P15108"/>
    </source>
</evidence>
<evidence type="ECO:0000256" key="2">
    <source>
        <dbReference type="SAM" id="MobiDB-lite"/>
    </source>
</evidence>
<evidence type="ECO:0000269" key="3">
    <source>
    </source>
</evidence>
<evidence type="ECO:0000269" key="4">
    <source>
    </source>
</evidence>
<evidence type="ECO:0000269" key="5">
    <source>
    </source>
</evidence>
<evidence type="ECO:0000269" key="6">
    <source>
    </source>
</evidence>
<evidence type="ECO:0000269" key="7">
    <source>
    </source>
</evidence>
<evidence type="ECO:0000269" key="8">
    <source>
    </source>
</evidence>
<evidence type="ECO:0000269" key="9">
    <source>
    </source>
</evidence>
<evidence type="ECO:0000269" key="10">
    <source>
    </source>
</evidence>
<evidence type="ECO:0000269" key="11">
    <source>
    </source>
</evidence>
<evidence type="ECO:0000269" key="12">
    <source>
    </source>
</evidence>
<evidence type="ECO:0000269" key="13">
    <source>
    </source>
</evidence>
<evidence type="ECO:0000269" key="14">
    <source>
    </source>
</evidence>
<evidence type="ECO:0000269" key="15">
    <source>
    </source>
</evidence>
<evidence type="ECO:0000269" key="16">
    <source>
    </source>
</evidence>
<evidence type="ECO:0000269" key="17">
    <source>
    </source>
</evidence>
<evidence type="ECO:0000269" key="18">
    <source>
    </source>
</evidence>
<evidence type="ECO:0000269" key="19">
    <source>
    </source>
</evidence>
<evidence type="ECO:0000269" key="20">
    <source>
    </source>
</evidence>
<evidence type="ECO:0000269" key="21">
    <source>
    </source>
</evidence>
<evidence type="ECO:0000269" key="22">
    <source>
    </source>
</evidence>
<evidence type="ECO:0000269" key="23">
    <source>
    </source>
</evidence>
<evidence type="ECO:0000269" key="24">
    <source>
    </source>
</evidence>
<evidence type="ECO:0000269" key="25">
    <source>
    </source>
</evidence>
<evidence type="ECO:0000269" key="26">
    <source>
    </source>
</evidence>
<evidence type="ECO:0000269" key="27">
    <source>
    </source>
</evidence>
<evidence type="ECO:0000269" key="28">
    <source>
    </source>
</evidence>
<evidence type="ECO:0000269" key="29">
    <source>
    </source>
</evidence>
<evidence type="ECO:0000269" key="30">
    <source>
    </source>
</evidence>
<evidence type="ECO:0000269" key="31">
    <source>
    </source>
</evidence>
<evidence type="ECO:0000305" key="32"/>
<evidence type="ECO:0007744" key="33">
    <source>
        <dbReference type="PDB" id="1A4H"/>
    </source>
</evidence>
<evidence type="ECO:0007744" key="34">
    <source>
        <dbReference type="PDB" id="1AH6"/>
    </source>
</evidence>
<evidence type="ECO:0007744" key="35">
    <source>
        <dbReference type="PDB" id="1AH8"/>
    </source>
</evidence>
<evidence type="ECO:0007744" key="36">
    <source>
        <dbReference type="PDB" id="1AM1"/>
    </source>
</evidence>
<evidence type="ECO:0007744" key="37">
    <source>
        <dbReference type="PDB" id="1AMW"/>
    </source>
</evidence>
<evidence type="ECO:0007744" key="38">
    <source>
        <dbReference type="PDB" id="1US7"/>
    </source>
</evidence>
<evidence type="ECO:0007744" key="39">
    <source>
        <dbReference type="PDB" id="1USU"/>
    </source>
</evidence>
<evidence type="ECO:0007744" key="40">
    <source>
        <dbReference type="PDB" id="1USV"/>
    </source>
</evidence>
<evidence type="ECO:0007744" key="41">
    <source>
        <dbReference type="PDB" id="2CG9"/>
    </source>
</evidence>
<evidence type="ECO:0007744" key="42">
    <source>
        <dbReference type="PDB" id="2WEP"/>
    </source>
</evidence>
<evidence type="ECO:0007829" key="43">
    <source>
        <dbReference type="PDB" id="1HK7"/>
    </source>
</evidence>
<evidence type="ECO:0007829" key="44">
    <source>
        <dbReference type="PDB" id="1USU"/>
    </source>
</evidence>
<evidence type="ECO:0007829" key="45">
    <source>
        <dbReference type="PDB" id="2AKP"/>
    </source>
</evidence>
<evidence type="ECO:0007829" key="46">
    <source>
        <dbReference type="PDB" id="2BRC"/>
    </source>
</evidence>
<evidence type="ECO:0007829" key="47">
    <source>
        <dbReference type="PDB" id="2CG9"/>
    </source>
</evidence>
<evidence type="ECO:0007829" key="48">
    <source>
        <dbReference type="PDB" id="2CGE"/>
    </source>
</evidence>
<evidence type="ECO:0007829" key="49">
    <source>
        <dbReference type="PDB" id="2IWX"/>
    </source>
</evidence>
<evidence type="ECO:0007829" key="50">
    <source>
        <dbReference type="PDB" id="4ASB"/>
    </source>
</evidence>
<evidence type="ECO:0007829" key="51">
    <source>
        <dbReference type="PDB" id="8OXU"/>
    </source>
</evidence>
<keyword id="KW-0002">3D-structure</keyword>
<keyword id="KW-0067">ATP-binding</keyword>
<keyword id="KW-0143">Chaperone</keyword>
<keyword id="KW-0963">Cytoplasm</keyword>
<keyword id="KW-0547">Nucleotide-binding</keyword>
<keyword id="KW-0597">Phosphoprotein</keyword>
<keyword id="KW-1185">Reference proteome</keyword>
<keyword id="KW-0677">Repeat</keyword>
<keyword id="KW-0346">Stress response</keyword>